<dbReference type="EC" id="2.4.2.29" evidence="1"/>
<dbReference type="EMBL" id="CP000946">
    <property type="protein sequence ID" value="ACA78849.1"/>
    <property type="molecule type" value="Genomic_DNA"/>
</dbReference>
<dbReference type="RefSeq" id="WP_000667319.1">
    <property type="nucleotide sequence ID" value="NZ_MTFT01000010.1"/>
</dbReference>
<dbReference type="SMR" id="B1J043"/>
<dbReference type="GeneID" id="93777054"/>
<dbReference type="KEGG" id="ecl:EcolC_3227"/>
<dbReference type="HOGENOM" id="CLU_022060_0_1_6"/>
<dbReference type="UniPathway" id="UPA00392"/>
<dbReference type="GO" id="GO:0005829">
    <property type="term" value="C:cytosol"/>
    <property type="evidence" value="ECO:0007669"/>
    <property type="project" value="TreeGrafter"/>
</dbReference>
<dbReference type="GO" id="GO:0046872">
    <property type="term" value="F:metal ion binding"/>
    <property type="evidence" value="ECO:0007669"/>
    <property type="project" value="UniProtKB-KW"/>
</dbReference>
<dbReference type="GO" id="GO:0008479">
    <property type="term" value="F:tRNA-guanosine(34) queuine transglycosylase activity"/>
    <property type="evidence" value="ECO:0007669"/>
    <property type="project" value="UniProtKB-UniRule"/>
</dbReference>
<dbReference type="GO" id="GO:0008616">
    <property type="term" value="P:queuosine biosynthetic process"/>
    <property type="evidence" value="ECO:0007669"/>
    <property type="project" value="UniProtKB-UniRule"/>
</dbReference>
<dbReference type="GO" id="GO:0002099">
    <property type="term" value="P:tRNA wobble guanine modification"/>
    <property type="evidence" value="ECO:0007669"/>
    <property type="project" value="TreeGrafter"/>
</dbReference>
<dbReference type="GO" id="GO:0101030">
    <property type="term" value="P:tRNA-guanine transglycosylation"/>
    <property type="evidence" value="ECO:0007669"/>
    <property type="project" value="InterPro"/>
</dbReference>
<dbReference type="FunFam" id="3.20.20.105:FF:000001">
    <property type="entry name" value="Queuine tRNA-ribosyltransferase"/>
    <property type="match status" value="1"/>
</dbReference>
<dbReference type="Gene3D" id="3.20.20.105">
    <property type="entry name" value="Queuine tRNA-ribosyltransferase-like"/>
    <property type="match status" value="1"/>
</dbReference>
<dbReference type="HAMAP" id="MF_00168">
    <property type="entry name" value="Q_tRNA_Tgt"/>
    <property type="match status" value="1"/>
</dbReference>
<dbReference type="InterPro" id="IPR050076">
    <property type="entry name" value="ArchSynthase1/Queuine_TRR"/>
</dbReference>
<dbReference type="InterPro" id="IPR004803">
    <property type="entry name" value="TGT"/>
</dbReference>
<dbReference type="InterPro" id="IPR036511">
    <property type="entry name" value="TGT-like_sf"/>
</dbReference>
<dbReference type="InterPro" id="IPR002616">
    <property type="entry name" value="tRNA_ribo_trans-like"/>
</dbReference>
<dbReference type="NCBIfam" id="TIGR00430">
    <property type="entry name" value="Q_tRNA_tgt"/>
    <property type="match status" value="1"/>
</dbReference>
<dbReference type="NCBIfam" id="TIGR00449">
    <property type="entry name" value="tgt_general"/>
    <property type="match status" value="1"/>
</dbReference>
<dbReference type="PANTHER" id="PTHR46499">
    <property type="entry name" value="QUEUINE TRNA-RIBOSYLTRANSFERASE"/>
    <property type="match status" value="1"/>
</dbReference>
<dbReference type="PANTHER" id="PTHR46499:SF1">
    <property type="entry name" value="QUEUINE TRNA-RIBOSYLTRANSFERASE"/>
    <property type="match status" value="1"/>
</dbReference>
<dbReference type="Pfam" id="PF01702">
    <property type="entry name" value="TGT"/>
    <property type="match status" value="1"/>
</dbReference>
<dbReference type="SUPFAM" id="SSF51713">
    <property type="entry name" value="tRNA-guanine transglycosylase"/>
    <property type="match status" value="1"/>
</dbReference>
<name>TGT_ECOLC</name>
<organism>
    <name type="scientific">Escherichia coli (strain ATCC 8739 / DSM 1576 / NBRC 3972 / NCIMB 8545 / WDCM 00012 / Crooks)</name>
    <dbReference type="NCBI Taxonomy" id="481805"/>
    <lineage>
        <taxon>Bacteria</taxon>
        <taxon>Pseudomonadati</taxon>
        <taxon>Pseudomonadota</taxon>
        <taxon>Gammaproteobacteria</taxon>
        <taxon>Enterobacterales</taxon>
        <taxon>Enterobacteriaceae</taxon>
        <taxon>Escherichia</taxon>
    </lineage>
</organism>
<proteinExistence type="inferred from homology"/>
<accession>B1J043</accession>
<protein>
    <recommendedName>
        <fullName evidence="1">Queuine tRNA-ribosyltransferase</fullName>
        <ecNumber evidence="1">2.4.2.29</ecNumber>
    </recommendedName>
    <alternativeName>
        <fullName evidence="1">Guanine insertion enzyme</fullName>
    </alternativeName>
    <alternativeName>
        <fullName evidence="1">tRNA-guanine transglycosylase</fullName>
    </alternativeName>
</protein>
<sequence>MKFELDTTDGRARRGRLVFDRGVVETPCFMPVGTYGTVKGMTPEEVEATGAQIILGNTFHLWLRPGQEIMKLHGDLHDFMQWKGPILTDSGGFQVFSLGDIRKITEQGVHFRNPINGDPIFLDPEKSMEIQYDLGSDIVMIFDECTPYPADWDYAKRSMEMSLRWAKRSRERFDSLGNKNALFGIIQGSVYEDLRDISVKGLVDIGFDGYAVGGLAVGEPKADMHRILEHVCPQIPADKPRYLMGVGKPEDLVEGVRRGIDMFDCVMPTRNARNGHLFVTDGVVKIRNAKYKSDTGPLDPECDCYTCRNYSRAYLHHLDRCNEILGARLNTIHNLRYYQRLMAGLRKAIEEGKLESFVTDFYQRQGREVPPLNVD</sequence>
<feature type="chain" id="PRO_1000077008" description="Queuine tRNA-ribosyltransferase">
    <location>
        <begin position="1"/>
        <end position="375"/>
    </location>
</feature>
<feature type="region of interest" description="RNA binding" evidence="1">
    <location>
        <begin position="245"/>
        <end position="251"/>
    </location>
</feature>
<feature type="region of interest" description="RNA binding; important for wobble base 34 recognition" evidence="1">
    <location>
        <begin position="269"/>
        <end position="273"/>
    </location>
</feature>
<feature type="active site" description="Proton acceptor" evidence="1">
    <location>
        <position position="89"/>
    </location>
</feature>
<feature type="active site" description="Nucleophile" evidence="1">
    <location>
        <position position="264"/>
    </location>
</feature>
<feature type="binding site" evidence="1">
    <location>
        <begin position="89"/>
        <end position="93"/>
    </location>
    <ligand>
        <name>substrate</name>
    </ligand>
</feature>
<feature type="binding site" evidence="1">
    <location>
        <position position="143"/>
    </location>
    <ligand>
        <name>substrate</name>
    </ligand>
</feature>
<feature type="binding site" evidence="1">
    <location>
        <position position="187"/>
    </location>
    <ligand>
        <name>substrate</name>
    </ligand>
</feature>
<feature type="binding site" evidence="1">
    <location>
        <position position="214"/>
    </location>
    <ligand>
        <name>substrate</name>
    </ligand>
</feature>
<feature type="binding site" evidence="1">
    <location>
        <position position="302"/>
    </location>
    <ligand>
        <name>Zn(2+)</name>
        <dbReference type="ChEBI" id="CHEBI:29105"/>
    </ligand>
</feature>
<feature type="binding site" evidence="1">
    <location>
        <position position="304"/>
    </location>
    <ligand>
        <name>Zn(2+)</name>
        <dbReference type="ChEBI" id="CHEBI:29105"/>
    </ligand>
</feature>
<feature type="binding site" evidence="1">
    <location>
        <position position="307"/>
    </location>
    <ligand>
        <name>Zn(2+)</name>
        <dbReference type="ChEBI" id="CHEBI:29105"/>
    </ligand>
</feature>
<feature type="binding site" evidence="1">
    <location>
        <position position="333"/>
    </location>
    <ligand>
        <name>Zn(2+)</name>
        <dbReference type="ChEBI" id="CHEBI:29105"/>
    </ligand>
</feature>
<comment type="function">
    <text evidence="1">Catalyzes the base-exchange of a guanine (G) residue with the queuine precursor 7-aminomethyl-7-deazaguanine (PreQ1) at position 34 (anticodon wobble position) in tRNAs with GU(N) anticodons (tRNA-Asp, -Asn, -His and -Tyr). Catalysis occurs through a double-displacement mechanism. The nucleophile active site attacks the C1' of nucleotide 34 to detach the guanine base from the RNA, forming a covalent enzyme-RNA intermediate. The proton acceptor active site deprotonates the incoming PreQ1, allowing a nucleophilic attack on the C1' of the ribose to form the product. After dissociation, two additional enzymatic reactions on the tRNA convert PreQ1 to queuine (Q), resulting in the hypermodified nucleoside queuosine (7-(((4,5-cis-dihydroxy-2-cyclopenten-1-yl)amino)methyl)-7-deazaguanosine).</text>
</comment>
<comment type="catalytic activity">
    <reaction evidence="1">
        <text>7-aminomethyl-7-carbaguanine + guanosine(34) in tRNA = 7-aminomethyl-7-carbaguanosine(34) in tRNA + guanine</text>
        <dbReference type="Rhea" id="RHEA:24104"/>
        <dbReference type="Rhea" id="RHEA-COMP:10341"/>
        <dbReference type="Rhea" id="RHEA-COMP:10342"/>
        <dbReference type="ChEBI" id="CHEBI:16235"/>
        <dbReference type="ChEBI" id="CHEBI:58703"/>
        <dbReference type="ChEBI" id="CHEBI:74269"/>
        <dbReference type="ChEBI" id="CHEBI:82833"/>
        <dbReference type="EC" id="2.4.2.29"/>
    </reaction>
</comment>
<comment type="cofactor">
    <cofactor evidence="1">
        <name>Zn(2+)</name>
        <dbReference type="ChEBI" id="CHEBI:29105"/>
    </cofactor>
    <text evidence="1">Binds 1 zinc ion per subunit.</text>
</comment>
<comment type="pathway">
    <text evidence="1">tRNA modification; tRNA-queuosine biosynthesis.</text>
</comment>
<comment type="subunit">
    <text evidence="1">Homodimer. Within each dimer, one monomer is responsible for RNA recognition and catalysis, while the other monomer binds to the replacement base PreQ1.</text>
</comment>
<comment type="similarity">
    <text evidence="1">Belongs to the queuine tRNA-ribosyltransferase family.</text>
</comment>
<gene>
    <name evidence="1" type="primary">tgt</name>
    <name type="ordered locus">EcolC_3227</name>
</gene>
<reference key="1">
    <citation type="submission" date="2008-02" db="EMBL/GenBank/DDBJ databases">
        <title>Complete sequence of Escherichia coli C str. ATCC 8739.</title>
        <authorList>
            <person name="Copeland A."/>
            <person name="Lucas S."/>
            <person name="Lapidus A."/>
            <person name="Glavina del Rio T."/>
            <person name="Dalin E."/>
            <person name="Tice H."/>
            <person name="Bruce D."/>
            <person name="Goodwin L."/>
            <person name="Pitluck S."/>
            <person name="Kiss H."/>
            <person name="Brettin T."/>
            <person name="Detter J.C."/>
            <person name="Han C."/>
            <person name="Kuske C.R."/>
            <person name="Schmutz J."/>
            <person name="Larimer F."/>
            <person name="Land M."/>
            <person name="Hauser L."/>
            <person name="Kyrpides N."/>
            <person name="Mikhailova N."/>
            <person name="Ingram L."/>
            <person name="Richardson P."/>
        </authorList>
    </citation>
    <scope>NUCLEOTIDE SEQUENCE [LARGE SCALE GENOMIC DNA]</scope>
    <source>
        <strain>ATCC 8739 / DSM 1576 / NBRC 3972 / NCIMB 8545 / WDCM 00012 / Crooks</strain>
    </source>
</reference>
<keyword id="KW-0328">Glycosyltransferase</keyword>
<keyword id="KW-0479">Metal-binding</keyword>
<keyword id="KW-0671">Queuosine biosynthesis</keyword>
<keyword id="KW-0808">Transferase</keyword>
<keyword id="KW-0819">tRNA processing</keyword>
<keyword id="KW-0862">Zinc</keyword>
<evidence type="ECO:0000255" key="1">
    <source>
        <dbReference type="HAMAP-Rule" id="MF_00168"/>
    </source>
</evidence>